<feature type="chain" id="PRO_0000239043" description="Protein-glutamate methylesterase/protein-glutamine glutaminase">
    <location>
        <begin position="1"/>
        <end position="347"/>
    </location>
</feature>
<feature type="domain" description="Response regulatory" evidence="1">
    <location>
        <begin position="6"/>
        <end position="123"/>
    </location>
</feature>
<feature type="domain" description="CheB-type methylesterase" evidence="1">
    <location>
        <begin position="150"/>
        <end position="342"/>
    </location>
</feature>
<feature type="active site" evidence="1">
    <location>
        <position position="162"/>
    </location>
</feature>
<feature type="active site" evidence="1">
    <location>
        <position position="188"/>
    </location>
</feature>
<feature type="active site" evidence="1">
    <location>
        <position position="284"/>
    </location>
</feature>
<feature type="modified residue" description="4-aspartylphosphate" evidence="1">
    <location>
        <position position="57"/>
    </location>
</feature>
<comment type="function">
    <text evidence="1">Involved in chemotaxis. Part of a chemotaxis signal transduction system that modulates chemotaxis in response to various stimuli. Catalyzes the demethylation of specific methylglutamate residues introduced into the chemoreceptors (methyl-accepting chemotaxis proteins or MCP) by CheR. Also mediates the irreversible deamidation of specific glutamine residues to glutamic acid.</text>
</comment>
<comment type="catalytic activity">
    <reaction evidence="1">
        <text>[protein]-L-glutamate 5-O-methyl ester + H2O = L-glutamyl-[protein] + methanol + H(+)</text>
        <dbReference type="Rhea" id="RHEA:23236"/>
        <dbReference type="Rhea" id="RHEA-COMP:10208"/>
        <dbReference type="Rhea" id="RHEA-COMP:10311"/>
        <dbReference type="ChEBI" id="CHEBI:15377"/>
        <dbReference type="ChEBI" id="CHEBI:15378"/>
        <dbReference type="ChEBI" id="CHEBI:17790"/>
        <dbReference type="ChEBI" id="CHEBI:29973"/>
        <dbReference type="ChEBI" id="CHEBI:82795"/>
        <dbReference type="EC" id="3.1.1.61"/>
    </reaction>
</comment>
<comment type="catalytic activity">
    <reaction evidence="1">
        <text>L-glutaminyl-[protein] + H2O = L-glutamyl-[protein] + NH4(+)</text>
        <dbReference type="Rhea" id="RHEA:16441"/>
        <dbReference type="Rhea" id="RHEA-COMP:10207"/>
        <dbReference type="Rhea" id="RHEA-COMP:10208"/>
        <dbReference type="ChEBI" id="CHEBI:15377"/>
        <dbReference type="ChEBI" id="CHEBI:28938"/>
        <dbReference type="ChEBI" id="CHEBI:29973"/>
        <dbReference type="ChEBI" id="CHEBI:30011"/>
        <dbReference type="EC" id="3.5.1.44"/>
    </reaction>
</comment>
<comment type="subcellular location">
    <subcellularLocation>
        <location evidence="1">Cytoplasm</location>
    </subcellularLocation>
</comment>
<comment type="domain">
    <text evidence="1">Contains a C-terminal catalytic domain, and an N-terminal region which modulates catalytic activity.</text>
</comment>
<comment type="PTM">
    <text evidence="1">Phosphorylated by CheA. Phosphorylation of the N-terminal regulatory domain activates the methylesterase activity.</text>
</comment>
<comment type="similarity">
    <text evidence="1">Belongs to the CheB family.</text>
</comment>
<accession>Q2KCH8</accession>
<evidence type="ECO:0000255" key="1">
    <source>
        <dbReference type="HAMAP-Rule" id="MF_00099"/>
    </source>
</evidence>
<keyword id="KW-0145">Chemotaxis</keyword>
<keyword id="KW-0963">Cytoplasm</keyword>
<keyword id="KW-0378">Hydrolase</keyword>
<keyword id="KW-0597">Phosphoprotein</keyword>
<keyword id="KW-1185">Reference proteome</keyword>
<proteinExistence type="inferred from homology"/>
<dbReference type="EC" id="3.1.1.61" evidence="1"/>
<dbReference type="EC" id="3.5.1.44" evidence="1"/>
<dbReference type="EMBL" id="CP000133">
    <property type="protein sequence ID" value="ABC89458.1"/>
    <property type="molecule type" value="Genomic_DNA"/>
</dbReference>
<dbReference type="RefSeq" id="WP_011424007.1">
    <property type="nucleotide sequence ID" value="NC_007761.1"/>
</dbReference>
<dbReference type="SMR" id="Q2KCH8"/>
<dbReference type="KEGG" id="ret:RHE_CH00643"/>
<dbReference type="eggNOG" id="COG2201">
    <property type="taxonomic scope" value="Bacteria"/>
</dbReference>
<dbReference type="HOGENOM" id="CLU_000445_51_0_5"/>
<dbReference type="OrthoDB" id="9793421at2"/>
<dbReference type="Proteomes" id="UP000001936">
    <property type="component" value="Chromosome"/>
</dbReference>
<dbReference type="GO" id="GO:0005737">
    <property type="term" value="C:cytoplasm"/>
    <property type="evidence" value="ECO:0007669"/>
    <property type="project" value="UniProtKB-SubCell"/>
</dbReference>
<dbReference type="GO" id="GO:0000156">
    <property type="term" value="F:phosphorelay response regulator activity"/>
    <property type="evidence" value="ECO:0007669"/>
    <property type="project" value="InterPro"/>
</dbReference>
<dbReference type="GO" id="GO:0008984">
    <property type="term" value="F:protein-glutamate methylesterase activity"/>
    <property type="evidence" value="ECO:0007669"/>
    <property type="project" value="UniProtKB-UniRule"/>
</dbReference>
<dbReference type="GO" id="GO:0050568">
    <property type="term" value="F:protein-glutamine glutaminase activity"/>
    <property type="evidence" value="ECO:0007669"/>
    <property type="project" value="UniProtKB-UniRule"/>
</dbReference>
<dbReference type="GO" id="GO:0006935">
    <property type="term" value="P:chemotaxis"/>
    <property type="evidence" value="ECO:0007669"/>
    <property type="project" value="UniProtKB-UniRule"/>
</dbReference>
<dbReference type="CDD" id="cd16432">
    <property type="entry name" value="CheB_Rec"/>
    <property type="match status" value="1"/>
</dbReference>
<dbReference type="CDD" id="cd17541">
    <property type="entry name" value="REC_CheB-like"/>
    <property type="match status" value="1"/>
</dbReference>
<dbReference type="Gene3D" id="3.40.50.2300">
    <property type="match status" value="1"/>
</dbReference>
<dbReference type="Gene3D" id="3.40.50.180">
    <property type="entry name" value="Methylesterase CheB, C-terminal domain"/>
    <property type="match status" value="1"/>
</dbReference>
<dbReference type="HAMAP" id="MF_00099">
    <property type="entry name" value="CheB_chemtxs"/>
    <property type="match status" value="1"/>
</dbReference>
<dbReference type="InterPro" id="IPR008248">
    <property type="entry name" value="CheB-like"/>
</dbReference>
<dbReference type="InterPro" id="IPR035909">
    <property type="entry name" value="CheB_C"/>
</dbReference>
<dbReference type="InterPro" id="IPR011006">
    <property type="entry name" value="CheY-like_superfamily"/>
</dbReference>
<dbReference type="InterPro" id="IPR000673">
    <property type="entry name" value="Sig_transdc_resp-reg_Me-estase"/>
</dbReference>
<dbReference type="InterPro" id="IPR001789">
    <property type="entry name" value="Sig_transdc_resp-reg_receiver"/>
</dbReference>
<dbReference type="NCBIfam" id="NF001965">
    <property type="entry name" value="PRK00742.1"/>
    <property type="match status" value="1"/>
</dbReference>
<dbReference type="NCBIfam" id="NF009206">
    <property type="entry name" value="PRK12555.1"/>
    <property type="match status" value="1"/>
</dbReference>
<dbReference type="PANTHER" id="PTHR42872">
    <property type="entry name" value="PROTEIN-GLUTAMATE METHYLESTERASE/PROTEIN-GLUTAMINE GLUTAMINASE"/>
    <property type="match status" value="1"/>
</dbReference>
<dbReference type="PANTHER" id="PTHR42872:SF6">
    <property type="entry name" value="PROTEIN-GLUTAMATE METHYLESTERASE_PROTEIN-GLUTAMINE GLUTAMINASE"/>
    <property type="match status" value="1"/>
</dbReference>
<dbReference type="Pfam" id="PF01339">
    <property type="entry name" value="CheB_methylest"/>
    <property type="match status" value="1"/>
</dbReference>
<dbReference type="Pfam" id="PF00072">
    <property type="entry name" value="Response_reg"/>
    <property type="match status" value="1"/>
</dbReference>
<dbReference type="PIRSF" id="PIRSF000876">
    <property type="entry name" value="RR_chemtxs_CheB"/>
    <property type="match status" value="1"/>
</dbReference>
<dbReference type="SMART" id="SM00448">
    <property type="entry name" value="REC"/>
    <property type="match status" value="1"/>
</dbReference>
<dbReference type="SUPFAM" id="SSF52172">
    <property type="entry name" value="CheY-like"/>
    <property type="match status" value="1"/>
</dbReference>
<dbReference type="SUPFAM" id="SSF52738">
    <property type="entry name" value="Methylesterase CheB, C-terminal domain"/>
    <property type="match status" value="1"/>
</dbReference>
<dbReference type="PROSITE" id="PS50122">
    <property type="entry name" value="CHEB"/>
    <property type="match status" value="1"/>
</dbReference>
<dbReference type="PROSITE" id="PS50110">
    <property type="entry name" value="RESPONSE_REGULATORY"/>
    <property type="match status" value="1"/>
</dbReference>
<organism>
    <name type="scientific">Rhizobium etli (strain ATCC 51251 / DSM 11541 / JCM 21823 / NBRC 15573 / CFN 42)</name>
    <dbReference type="NCBI Taxonomy" id="347834"/>
    <lineage>
        <taxon>Bacteria</taxon>
        <taxon>Pseudomonadati</taxon>
        <taxon>Pseudomonadota</taxon>
        <taxon>Alphaproteobacteria</taxon>
        <taxon>Hyphomicrobiales</taxon>
        <taxon>Rhizobiaceae</taxon>
        <taxon>Rhizobium/Agrobacterium group</taxon>
        <taxon>Rhizobium</taxon>
    </lineage>
</organism>
<reference key="1">
    <citation type="journal article" date="2006" name="Proc. Natl. Acad. Sci. U.S.A.">
        <title>The partitioned Rhizobium etli genome: genetic and metabolic redundancy in seven interacting replicons.</title>
        <authorList>
            <person name="Gonzalez V."/>
            <person name="Santamaria R.I."/>
            <person name="Bustos P."/>
            <person name="Hernandez-Gonzalez I."/>
            <person name="Medrano-Soto A."/>
            <person name="Moreno-Hagelsieb G."/>
            <person name="Janga S.C."/>
            <person name="Ramirez M.A."/>
            <person name="Jimenez-Jacinto V."/>
            <person name="Collado-Vides J."/>
            <person name="Davila G."/>
        </authorList>
    </citation>
    <scope>NUCLEOTIDE SEQUENCE [LARGE SCALE GENOMIC DNA]</scope>
    <source>
        <strain>ATCC 51251 / DSM 11541 / JCM 21823 / NBRC 15573 / CFN 42</strain>
    </source>
</reference>
<sequence>MSAPARVLVVDDSPTMRGLITAVLSSDPEVSVIGQAGDALEAREAIKRLNPDVVTLDIEMPNMNGLDFLEKIMTLRPMPVIMVSTMTHRGAEATLAALEIGAFDCVGKPGPGEHRPFGDLAEKVKAAARTQRQFSQPAAAVAPPPSVADFRVGRKIVAIGSSTGGVEALIAVLQKFPANCPPTVITQHMPPTFTKSFAERLNRLCAPVVQEATDGARLEIGKIYLAPGGERHLQVSGGSAPCCRLVDRAPVNGHRPSVDVLFDSVAELAGRNAVGVILTGMGRDGAAGLLKMRHAGARTLGQTEKTCVVYGMPRVAHELGAVEQQLPLTAIGEEILKLTAARKEGTE</sequence>
<gene>
    <name evidence="1" type="primary">cheB</name>
    <name type="synonym">cheB1</name>
    <name type="ordered locus">RHE_CH00642</name>
    <name type="ORF">RHE_CH00643</name>
</gene>
<protein>
    <recommendedName>
        <fullName evidence="1">Protein-glutamate methylesterase/protein-glutamine glutaminase</fullName>
        <ecNumber evidence="1">3.1.1.61</ecNumber>
        <ecNumber evidence="1">3.5.1.44</ecNumber>
    </recommendedName>
</protein>
<name>CHEB1_RHIEC</name>